<dbReference type="EC" id="3.2.1.23" evidence="2"/>
<dbReference type="EMBL" id="AP009256">
    <property type="protein sequence ID" value="BAF40363.1"/>
    <property type="molecule type" value="Genomic_DNA"/>
</dbReference>
<dbReference type="RefSeq" id="WP_011743877.1">
    <property type="nucleotide sequence ID" value="NC_008618.1"/>
</dbReference>
<dbReference type="SMR" id="A1A3T0"/>
<dbReference type="STRING" id="367928.BAD_1582"/>
<dbReference type="CAZy" id="GH2">
    <property type="family name" value="Glycoside Hydrolase Family 2"/>
</dbReference>
<dbReference type="PaxDb" id="1680-BADO_1688"/>
<dbReference type="GeneID" id="4557022"/>
<dbReference type="KEGG" id="bad:BAD_1582"/>
<dbReference type="HOGENOM" id="CLU_002346_0_2_11"/>
<dbReference type="Proteomes" id="UP000008702">
    <property type="component" value="Chromosome"/>
</dbReference>
<dbReference type="GO" id="GO:0009341">
    <property type="term" value="C:beta-galactosidase complex"/>
    <property type="evidence" value="ECO:0007669"/>
    <property type="project" value="InterPro"/>
</dbReference>
<dbReference type="GO" id="GO:0004565">
    <property type="term" value="F:beta-galactosidase activity"/>
    <property type="evidence" value="ECO:0007669"/>
    <property type="project" value="UniProtKB-EC"/>
</dbReference>
<dbReference type="GO" id="GO:0030246">
    <property type="term" value="F:carbohydrate binding"/>
    <property type="evidence" value="ECO:0007669"/>
    <property type="project" value="InterPro"/>
</dbReference>
<dbReference type="GO" id="GO:0046872">
    <property type="term" value="F:metal ion binding"/>
    <property type="evidence" value="ECO:0007669"/>
    <property type="project" value="UniProtKB-KW"/>
</dbReference>
<dbReference type="GO" id="GO:0005990">
    <property type="term" value="P:lactose catabolic process"/>
    <property type="evidence" value="ECO:0007669"/>
    <property type="project" value="TreeGrafter"/>
</dbReference>
<dbReference type="Gene3D" id="2.70.98.10">
    <property type="match status" value="1"/>
</dbReference>
<dbReference type="Gene3D" id="2.60.120.260">
    <property type="entry name" value="Galactose-binding domain-like"/>
    <property type="match status" value="1"/>
</dbReference>
<dbReference type="Gene3D" id="3.20.20.80">
    <property type="entry name" value="Glycosidases"/>
    <property type="match status" value="1"/>
</dbReference>
<dbReference type="Gene3D" id="2.60.40.10">
    <property type="entry name" value="Immunoglobulins"/>
    <property type="match status" value="2"/>
</dbReference>
<dbReference type="InterPro" id="IPR004199">
    <property type="entry name" value="B-gal_small/dom_5"/>
</dbReference>
<dbReference type="InterPro" id="IPR050347">
    <property type="entry name" value="Bact_Beta-galactosidase"/>
</dbReference>
<dbReference type="InterPro" id="IPR036156">
    <property type="entry name" value="Beta-gal/glucu_dom_sf"/>
</dbReference>
<dbReference type="InterPro" id="IPR011013">
    <property type="entry name" value="Gal_mutarotase_sf_dom"/>
</dbReference>
<dbReference type="InterPro" id="IPR008979">
    <property type="entry name" value="Galactose-bd-like_sf"/>
</dbReference>
<dbReference type="InterPro" id="IPR014718">
    <property type="entry name" value="GH-type_carb-bd"/>
</dbReference>
<dbReference type="InterPro" id="IPR006101">
    <property type="entry name" value="Glyco_hydro_2"/>
</dbReference>
<dbReference type="InterPro" id="IPR006103">
    <property type="entry name" value="Glyco_hydro_2_cat"/>
</dbReference>
<dbReference type="InterPro" id="IPR023230">
    <property type="entry name" value="Glyco_hydro_2_CS"/>
</dbReference>
<dbReference type="InterPro" id="IPR006102">
    <property type="entry name" value="Glyco_hydro_2_Ig-like"/>
</dbReference>
<dbReference type="InterPro" id="IPR006104">
    <property type="entry name" value="Glyco_hydro_2_N"/>
</dbReference>
<dbReference type="InterPro" id="IPR017853">
    <property type="entry name" value="Glycoside_hydrolase_SF"/>
</dbReference>
<dbReference type="InterPro" id="IPR013783">
    <property type="entry name" value="Ig-like_fold"/>
</dbReference>
<dbReference type="InterPro" id="IPR032312">
    <property type="entry name" value="LacZ_4"/>
</dbReference>
<dbReference type="PANTHER" id="PTHR46323">
    <property type="entry name" value="BETA-GALACTOSIDASE"/>
    <property type="match status" value="1"/>
</dbReference>
<dbReference type="PANTHER" id="PTHR46323:SF2">
    <property type="entry name" value="BETA-GALACTOSIDASE"/>
    <property type="match status" value="1"/>
</dbReference>
<dbReference type="Pfam" id="PF02929">
    <property type="entry name" value="Bgal_small_N"/>
    <property type="match status" value="1"/>
</dbReference>
<dbReference type="Pfam" id="PF00703">
    <property type="entry name" value="Glyco_hydro_2"/>
    <property type="match status" value="1"/>
</dbReference>
<dbReference type="Pfam" id="PF02836">
    <property type="entry name" value="Glyco_hydro_2_C"/>
    <property type="match status" value="1"/>
</dbReference>
<dbReference type="Pfam" id="PF02837">
    <property type="entry name" value="Glyco_hydro_2_N"/>
    <property type="match status" value="1"/>
</dbReference>
<dbReference type="Pfam" id="PF16353">
    <property type="entry name" value="LacZ_4"/>
    <property type="match status" value="1"/>
</dbReference>
<dbReference type="PRINTS" id="PR00132">
    <property type="entry name" value="GLHYDRLASE2"/>
</dbReference>
<dbReference type="SMART" id="SM01038">
    <property type="entry name" value="Bgal_small_N"/>
    <property type="match status" value="1"/>
</dbReference>
<dbReference type="SUPFAM" id="SSF51445">
    <property type="entry name" value="(Trans)glycosidases"/>
    <property type="match status" value="1"/>
</dbReference>
<dbReference type="SUPFAM" id="SSF49303">
    <property type="entry name" value="beta-Galactosidase/glucuronidase domain"/>
    <property type="match status" value="2"/>
</dbReference>
<dbReference type="SUPFAM" id="SSF74650">
    <property type="entry name" value="Galactose mutarotase-like"/>
    <property type="match status" value="1"/>
</dbReference>
<dbReference type="SUPFAM" id="SSF49785">
    <property type="entry name" value="Galactose-binding domain-like"/>
    <property type="match status" value="1"/>
</dbReference>
<dbReference type="PROSITE" id="PS00719">
    <property type="entry name" value="GLYCOSYL_HYDROL_F2_1"/>
    <property type="match status" value="1"/>
</dbReference>
<protein>
    <recommendedName>
        <fullName evidence="3">Beta-galactosidase BgaC</fullName>
        <shortName evidence="4">Beta-gal</shortName>
        <ecNumber evidence="2">3.2.1.23</ecNumber>
    </recommendedName>
    <alternativeName>
        <fullName evidence="4">Lactase</fullName>
    </alternativeName>
</protein>
<sequence>MADTAELAIVHATTASASWLTDPTVFAANRKPAHSSHRYVIGETREPKQSLDGEWKVRIEQARNVDVESAPFAAVDFEDGDFGAIEVPGHLQMAGYLKNKYVNIQYPWDGHEDPQAPNIPENNHVAIYRRRFALDAQLARTLENDGTVSLTFHGAATAIYVWLDGTFVGYGEDGFTPSEFDVTEALRNGNGNAADSPEAEHTLTVACYEYSSASWLEDQDFWRLHGLFRTVELAAQPHTHVETVQLEADYTAADTAGTADTAELNAALTLRNPADAMTIESTLRDGDGNVVWESTQACNGEIALNSGKMTNIAPWSAESPTLYTLTVRVVGHDGAIIETVTQKIGFRTFRIENGIMTINGKRIVFKGADRHEFDAKRGRAITREDMLSDVVFCKRHNINAIRTSHYPNQEYWYDLCDEYGLYLIDETNMETHGTWVANNVERPEDGIPGSRPEWEGACVDRINSMMRRDYNHPSVLIWSLGNESSAGEVFRAMYRHAHTIDPNRPVHYEGSVHMREFEDVTDIESRMYAHADEIERYLNDGSPAHTDGPKKPYISCEYMHAMGNSCGNMDEYTALERYPMYQGGFIWDFIDQAIETKLPDGTTRMCYGGDFGDRPSDYEFSGDGLLFADRTPSPKAQEVKQLYANVKIAVSVDEARITNDNLFVSTGDYRFVLRILADGKPVWSTTRRFDVAAGESASFEVDWPVDDYRSNAEELVLEVSQQLGNACDWAPAGYELAFGQCVVAGAKTTADAVDAAGAPADGTVTLGRWNAGVRGQGREALFSRTQGGMVSYTFGEREFVLRRPSITTFRPLTDNDRGAGHAFERAAWAVAGKYARCVDCAIANRGENAVEATYTYELAIPQRTKVTVRYVADTAGLVSLDVEYPGEKNGDLPTIPAFGIEWALPVEYANLRFYGAGPEETYADRRHAKLGVWSTTAGDDCAPYLLPQETGNHEDVRWAEITDDSGHGVRVKRGAGAKPFAMSLLPYSSTMLEEALHQDELPKPRHMFLRLLAAQMGVGGDDSWMSPVHEQYQLPADQPLSLNVQLKLF</sequence>
<accession>A1A3T0</accession>
<organism>
    <name type="scientific">Bifidobacterium adolescentis (strain ATCC 15703 / DSM 20083 / NCTC 11814 / E194a)</name>
    <dbReference type="NCBI Taxonomy" id="367928"/>
    <lineage>
        <taxon>Bacteria</taxon>
        <taxon>Bacillati</taxon>
        <taxon>Actinomycetota</taxon>
        <taxon>Actinomycetes</taxon>
        <taxon>Bifidobacteriales</taxon>
        <taxon>Bifidobacteriaceae</taxon>
        <taxon>Bifidobacterium</taxon>
    </lineage>
</organism>
<gene>
    <name evidence="3" type="primary">bgaC</name>
    <name evidence="5" type="ordered locus">BAD_1582</name>
</gene>
<feature type="chain" id="PRO_0000453260" description="Beta-galactosidase BgaC">
    <location>
        <begin position="1"/>
        <end position="1049"/>
    </location>
</feature>
<feature type="active site" description="Proton donor" evidence="1">
    <location>
        <position position="483"/>
    </location>
</feature>
<feature type="active site" description="Nucleophile" evidence="1">
    <location>
        <position position="557"/>
    </location>
</feature>
<feature type="binding site" evidence="1">
    <location>
        <position position="430"/>
    </location>
    <ligand>
        <name>Mg(2+)</name>
        <dbReference type="ChEBI" id="CHEBI:18420"/>
    </ligand>
</feature>
<feature type="binding site" evidence="1">
    <location>
        <position position="432"/>
    </location>
    <ligand>
        <name>Mg(2+)</name>
        <dbReference type="ChEBI" id="CHEBI:18420"/>
    </ligand>
</feature>
<feature type="binding site" evidence="1">
    <location>
        <position position="483"/>
    </location>
    <ligand>
        <name>Mg(2+)</name>
        <dbReference type="ChEBI" id="CHEBI:18420"/>
    </ligand>
</feature>
<feature type="site" description="Transition state stabilizer" evidence="1">
    <location>
        <position position="371"/>
    </location>
</feature>
<feature type="site" description="Transition state stabilizer" evidence="1">
    <location>
        <position position="405"/>
    </location>
</feature>
<reference key="1">
    <citation type="submission" date="2006-12" db="EMBL/GenBank/DDBJ databases">
        <title>Bifidobacterium adolescentis complete genome sequence.</title>
        <authorList>
            <person name="Suzuki T."/>
            <person name="Tsuda Y."/>
            <person name="Kanou N."/>
            <person name="Inoue T."/>
            <person name="Kumazaki K."/>
            <person name="Nagano S."/>
            <person name="Hirai S."/>
            <person name="Tanaka K."/>
            <person name="Watanabe K."/>
        </authorList>
    </citation>
    <scope>NUCLEOTIDE SEQUENCE [LARGE SCALE GENOMIC DNA]</scope>
    <source>
        <strain>ATCC 15703 / DSM 20083 / NCTC 11814 / E194a</strain>
    </source>
</reference>
<reference key="2">
    <citation type="journal article" date="2021" name="Appl. Microbiol. Biotechnol.">
        <title>Metagenomic identification, purification and characterisation of the Bifidobacterium adolescentis BgaC beta-galactosidase.</title>
        <authorList>
            <person name="Mulualem D.M."/>
            <person name="Agbavwe C."/>
            <person name="Ogilvie L.A."/>
            <person name="Jones B.V."/>
            <person name="Kilcoyne M."/>
            <person name="O'Byrne C."/>
            <person name="Boyd A."/>
        </authorList>
    </citation>
    <scope>FUNCTION</scope>
    <scope>CATALYTIC ACTIVITY</scope>
    <scope>COFACTOR</scope>
    <scope>ACTIVITY REGULATION</scope>
    <scope>BIOPHYSICOCHEMICAL PROPERTIES</scope>
    <scope>BIOTECHNOLOGY</scope>
    <source>
        <strain>ATCC 15703 / DSM 20083 / NCTC 11814 / E194a</strain>
    </source>
</reference>
<name>BGAC_BIFAA</name>
<keyword id="KW-0326">Glycosidase</keyword>
<keyword id="KW-0378">Hydrolase</keyword>
<keyword id="KW-0460">Magnesium</keyword>
<keyword id="KW-0479">Metal-binding</keyword>
<keyword id="KW-1185">Reference proteome</keyword>
<comment type="function">
    <text evidence="2">Catalyzes efficient hydrolysis of lactose. Also exhibits transglycosylation activity to produce oligosaccharides at low concentrations of glucose. In vitro, acts on the synthetic chromogenic substrate ortho-nitrophenyl-beta-D-galactopyranoside (ONPG). Acts exclusively on terminal beta-linked Gal residues.</text>
</comment>
<comment type="catalytic activity">
    <reaction evidence="2">
        <text>Hydrolysis of terminal non-reducing beta-D-galactose residues in beta-D-galactosides.</text>
        <dbReference type="EC" id="3.2.1.23"/>
    </reaction>
</comment>
<comment type="cofactor">
    <cofactor evidence="2">
        <name>Mg(2+)</name>
        <dbReference type="ChEBI" id="CHEBI:18420"/>
    </cofactor>
    <text evidence="2">Mg(2+) enhances the activity by 30%, followed by Ca(2+) and then Zn(2+).</text>
</comment>
<comment type="activity regulation">
    <text evidence="2">Activity is inhibited by EDTA. Activity is abolished by Cu(2+) and shows 59% reduction in the presence of Mn(2+) (PubMed:33427933). Lactose acts as a competitive inhibitor (PubMed:33427933).</text>
</comment>
<comment type="biophysicochemical properties">
    <kinetics>
        <KM evidence="2">3.7 mM for lactose</KM>
        <KM evidence="2">2.5 mM for ONPG</KM>
        <Vmax evidence="2">22.0 umol/min/mg enzyme with lactose as substrate</Vmax>
        <Vmax evidence="2">107.0 umol/min/mg enzyme with ONPG as substrate</Vmax>
    </kinetics>
    <phDependence>
        <text evidence="2">Optimum pH is 7.0 with ONPG as substrate. Retains 60% of its activity between pH 6.0 and 8.0.</text>
    </phDependence>
    <temperatureDependence>
        <text evidence="2">Optimum temperature is 37 degrees Celsius with ONPG as substrate. Retains 60% of its activity between 20 and 45 degrees Celsius.</text>
    </temperatureDependence>
</comment>
<comment type="biotechnology">
    <text evidence="2">Possesses the industrially desirable properties of high substrate affinity for lactose and low product inhibition by galactose, and is an ideal candidate for dairy industry applications and prebiotic manufacture.</text>
</comment>
<comment type="similarity">
    <text evidence="4">Belongs to the glycosyl hydrolase 2 family.</text>
</comment>
<proteinExistence type="evidence at protein level"/>
<evidence type="ECO:0000250" key="1">
    <source>
        <dbReference type="UniProtKB" id="P00722"/>
    </source>
</evidence>
<evidence type="ECO:0000269" key="2">
    <source>
    </source>
</evidence>
<evidence type="ECO:0000303" key="3">
    <source>
    </source>
</evidence>
<evidence type="ECO:0000305" key="4"/>
<evidence type="ECO:0000312" key="5">
    <source>
        <dbReference type="EMBL" id="BAF40363.1"/>
    </source>
</evidence>